<keyword id="KW-0963">Cytoplasm</keyword>
<keyword id="KW-0312">Gluconeogenesis</keyword>
<keyword id="KW-0324">Glycolysis</keyword>
<keyword id="KW-0413">Isomerase</keyword>
<sequence length="548" mass="61525">MKKINPTQTSAWKALQQHFKEIEPIHIRHLFHADPKRSEKFSLTFNDLIRVDFSKNRLTAQTIEKLQALAQETDLALAICSMFSGGKINETEERPVLHIALRNRGNQPILVDGQDVMPLVNAVLEKMKRFCHQVIKGDWNGYSGQTITDVVNIGIGGSDLGPYMATEALKPYKNHLKMHFVSNVDGTDIVETLKALNPARTLFIVASKTFTTQETMTNAQTAREWFLKTAGDSAHVARHFVALSTNIKEVTNFGIDPENSFEFWDWVGGRYSLWSAIGLPIALSIGFDNFEKLLEGAYEMDQHFLKTDFTHNIPVILALIGIWYSHFFGAETEAVLPYDQYLHRFPAYLQQASMESNGKWVDRDGKPVGYQTGSILWGEPGTNGQHAFYQLIHQGTKIIPCDFIAPVISHNAIGDHHHKLLANFFAQTQALAFGKTEQEVQEELMAEGVFSEKATYLAPFKAFSGNRPTNSILLKQITPLSLGALIALYEHKIFTQGVILNIFSFDQWGVELGKKLASGILSELEGPEKVSCHDSSTNSLINCFKKWH</sequence>
<organism>
    <name type="scientific">Hamiltonella defensa subsp. Acyrthosiphon pisum (strain 5AT)</name>
    <dbReference type="NCBI Taxonomy" id="572265"/>
    <lineage>
        <taxon>Bacteria</taxon>
        <taxon>Pseudomonadati</taxon>
        <taxon>Pseudomonadota</taxon>
        <taxon>Gammaproteobacteria</taxon>
        <taxon>Enterobacterales</taxon>
        <taxon>Enterobacteriaceae</taxon>
        <taxon>aphid secondary symbionts</taxon>
        <taxon>Candidatus Hamiltonella</taxon>
    </lineage>
</organism>
<evidence type="ECO:0000255" key="1">
    <source>
        <dbReference type="HAMAP-Rule" id="MF_00473"/>
    </source>
</evidence>
<accession>C4K8I7</accession>
<feature type="chain" id="PRO_1000206367" description="Glucose-6-phosphate isomerase">
    <location>
        <begin position="1"/>
        <end position="548"/>
    </location>
</feature>
<feature type="active site" description="Proton donor" evidence="1">
    <location>
        <position position="355"/>
    </location>
</feature>
<feature type="active site" evidence="1">
    <location>
        <position position="386"/>
    </location>
</feature>
<feature type="active site" evidence="1">
    <location>
        <position position="514"/>
    </location>
</feature>
<name>G6PI_HAMD5</name>
<comment type="function">
    <text evidence="1">Catalyzes the reversible isomerization of glucose-6-phosphate to fructose-6-phosphate.</text>
</comment>
<comment type="catalytic activity">
    <reaction evidence="1">
        <text>alpha-D-glucose 6-phosphate = beta-D-fructose 6-phosphate</text>
        <dbReference type="Rhea" id="RHEA:11816"/>
        <dbReference type="ChEBI" id="CHEBI:57634"/>
        <dbReference type="ChEBI" id="CHEBI:58225"/>
        <dbReference type="EC" id="5.3.1.9"/>
    </reaction>
</comment>
<comment type="pathway">
    <text evidence="1">Carbohydrate biosynthesis; gluconeogenesis.</text>
</comment>
<comment type="pathway">
    <text evidence="1">Carbohydrate degradation; glycolysis; D-glyceraldehyde 3-phosphate and glycerone phosphate from D-glucose: step 2/4.</text>
</comment>
<comment type="subcellular location">
    <subcellularLocation>
        <location evidence="1">Cytoplasm</location>
    </subcellularLocation>
</comment>
<comment type="similarity">
    <text evidence="1">Belongs to the GPI family.</text>
</comment>
<dbReference type="EC" id="5.3.1.9" evidence="1"/>
<dbReference type="EMBL" id="CP001277">
    <property type="protein sequence ID" value="ACQ66824.1"/>
    <property type="molecule type" value="Genomic_DNA"/>
</dbReference>
<dbReference type="RefSeq" id="WP_012737789.1">
    <property type="nucleotide sequence ID" value="NC_012751.1"/>
</dbReference>
<dbReference type="SMR" id="C4K8I7"/>
<dbReference type="STRING" id="572265.HDEF_0049"/>
<dbReference type="GeneID" id="66259991"/>
<dbReference type="KEGG" id="hde:HDEF_0049"/>
<dbReference type="eggNOG" id="COG0166">
    <property type="taxonomic scope" value="Bacteria"/>
</dbReference>
<dbReference type="HOGENOM" id="CLU_017947_3_1_6"/>
<dbReference type="UniPathway" id="UPA00109">
    <property type="reaction ID" value="UER00181"/>
</dbReference>
<dbReference type="UniPathway" id="UPA00138"/>
<dbReference type="Proteomes" id="UP000002334">
    <property type="component" value="Chromosome"/>
</dbReference>
<dbReference type="GO" id="GO:0005829">
    <property type="term" value="C:cytosol"/>
    <property type="evidence" value="ECO:0007669"/>
    <property type="project" value="TreeGrafter"/>
</dbReference>
<dbReference type="GO" id="GO:0097367">
    <property type="term" value="F:carbohydrate derivative binding"/>
    <property type="evidence" value="ECO:0007669"/>
    <property type="project" value="InterPro"/>
</dbReference>
<dbReference type="GO" id="GO:0004347">
    <property type="term" value="F:glucose-6-phosphate isomerase activity"/>
    <property type="evidence" value="ECO:0007669"/>
    <property type="project" value="UniProtKB-UniRule"/>
</dbReference>
<dbReference type="GO" id="GO:0048029">
    <property type="term" value="F:monosaccharide binding"/>
    <property type="evidence" value="ECO:0007669"/>
    <property type="project" value="TreeGrafter"/>
</dbReference>
<dbReference type="GO" id="GO:0006094">
    <property type="term" value="P:gluconeogenesis"/>
    <property type="evidence" value="ECO:0007669"/>
    <property type="project" value="UniProtKB-UniRule"/>
</dbReference>
<dbReference type="GO" id="GO:0051156">
    <property type="term" value="P:glucose 6-phosphate metabolic process"/>
    <property type="evidence" value="ECO:0007669"/>
    <property type="project" value="TreeGrafter"/>
</dbReference>
<dbReference type="GO" id="GO:0006096">
    <property type="term" value="P:glycolytic process"/>
    <property type="evidence" value="ECO:0007669"/>
    <property type="project" value="UniProtKB-UniRule"/>
</dbReference>
<dbReference type="CDD" id="cd05015">
    <property type="entry name" value="SIS_PGI_1"/>
    <property type="match status" value="1"/>
</dbReference>
<dbReference type="CDD" id="cd05016">
    <property type="entry name" value="SIS_PGI_2"/>
    <property type="match status" value="1"/>
</dbReference>
<dbReference type="FunFam" id="1.10.1390.10:FF:000001">
    <property type="entry name" value="Glucose-6-phosphate isomerase"/>
    <property type="match status" value="1"/>
</dbReference>
<dbReference type="FunFam" id="3.40.50.10490:FF:000004">
    <property type="entry name" value="Glucose-6-phosphate isomerase"/>
    <property type="match status" value="1"/>
</dbReference>
<dbReference type="Gene3D" id="1.10.1390.10">
    <property type="match status" value="1"/>
</dbReference>
<dbReference type="Gene3D" id="3.40.50.10490">
    <property type="entry name" value="Glucose-6-phosphate isomerase like protein, domain 1"/>
    <property type="match status" value="2"/>
</dbReference>
<dbReference type="HAMAP" id="MF_00473">
    <property type="entry name" value="G6P_isomerase"/>
    <property type="match status" value="1"/>
</dbReference>
<dbReference type="InterPro" id="IPR001672">
    <property type="entry name" value="G6P_Isomerase"/>
</dbReference>
<dbReference type="InterPro" id="IPR023096">
    <property type="entry name" value="G6P_Isomerase_C"/>
</dbReference>
<dbReference type="InterPro" id="IPR018189">
    <property type="entry name" value="Phosphoglucose_isomerase_CS"/>
</dbReference>
<dbReference type="InterPro" id="IPR046348">
    <property type="entry name" value="SIS_dom_sf"/>
</dbReference>
<dbReference type="InterPro" id="IPR035476">
    <property type="entry name" value="SIS_PGI_1"/>
</dbReference>
<dbReference type="InterPro" id="IPR035482">
    <property type="entry name" value="SIS_PGI_2"/>
</dbReference>
<dbReference type="NCBIfam" id="NF001211">
    <property type="entry name" value="PRK00179.1"/>
    <property type="match status" value="1"/>
</dbReference>
<dbReference type="PANTHER" id="PTHR11469">
    <property type="entry name" value="GLUCOSE-6-PHOSPHATE ISOMERASE"/>
    <property type="match status" value="1"/>
</dbReference>
<dbReference type="PANTHER" id="PTHR11469:SF1">
    <property type="entry name" value="GLUCOSE-6-PHOSPHATE ISOMERASE"/>
    <property type="match status" value="1"/>
</dbReference>
<dbReference type="Pfam" id="PF00342">
    <property type="entry name" value="PGI"/>
    <property type="match status" value="1"/>
</dbReference>
<dbReference type="PRINTS" id="PR00662">
    <property type="entry name" value="G6PISOMERASE"/>
</dbReference>
<dbReference type="SUPFAM" id="SSF53697">
    <property type="entry name" value="SIS domain"/>
    <property type="match status" value="1"/>
</dbReference>
<dbReference type="PROSITE" id="PS00765">
    <property type="entry name" value="P_GLUCOSE_ISOMERASE_1"/>
    <property type="match status" value="1"/>
</dbReference>
<dbReference type="PROSITE" id="PS00174">
    <property type="entry name" value="P_GLUCOSE_ISOMERASE_2"/>
    <property type="match status" value="1"/>
</dbReference>
<dbReference type="PROSITE" id="PS51463">
    <property type="entry name" value="P_GLUCOSE_ISOMERASE_3"/>
    <property type="match status" value="1"/>
</dbReference>
<proteinExistence type="inferred from homology"/>
<protein>
    <recommendedName>
        <fullName evidence="1">Glucose-6-phosphate isomerase</fullName>
        <shortName evidence="1">GPI</shortName>
        <ecNumber evidence="1">5.3.1.9</ecNumber>
    </recommendedName>
    <alternativeName>
        <fullName evidence="1">Phosphoglucose isomerase</fullName>
        <shortName evidence="1">PGI</shortName>
    </alternativeName>
    <alternativeName>
        <fullName evidence="1">Phosphohexose isomerase</fullName>
        <shortName evidence="1">PHI</shortName>
    </alternativeName>
</protein>
<gene>
    <name evidence="1" type="primary">pgi</name>
    <name type="ordered locus">HDEF_0049</name>
</gene>
<reference key="1">
    <citation type="journal article" date="2009" name="Proc. Natl. Acad. Sci. U.S.A.">
        <title>Hamiltonella defensa, genome evolution of protective bacterial endosymbiont from pathogenic ancestors.</title>
        <authorList>
            <person name="Degnan P.H."/>
            <person name="Yu Y."/>
            <person name="Sisneros N."/>
            <person name="Wing R.A."/>
            <person name="Moran N.A."/>
        </authorList>
    </citation>
    <scope>NUCLEOTIDE SEQUENCE [LARGE SCALE GENOMIC DNA]</scope>
    <source>
        <strain>5AT</strain>
    </source>
</reference>